<protein>
    <recommendedName>
        <fullName evidence="9">Long-chain-fatty-acid--CoA ligase 4</fullName>
        <ecNumber evidence="5 6 7">6.2.1.3</ecNumber>
    </recommendedName>
    <alternativeName>
        <fullName evidence="9">Arachidonate--CoA ligase</fullName>
        <ecNumber evidence="6">6.2.1.15</ecNumber>
    </alternativeName>
    <alternativeName>
        <fullName>Long-chain acyl-CoA synthetase 4</fullName>
        <shortName>LACS 4</shortName>
    </alternativeName>
</protein>
<accession>O35547</accession>
<sequence>MKLKLNVLTIVLLPVHLLITIYSALIFIPWYFLTNAKKKNAMAKRIKAKPTSDKPGSPYRSVTHFDSLAVIDIPGADTLDKLFDHAVAKFGKKDSLGTREILSEENEMQPNGKVFKKLILGNYKWINYLEVNCRVNNFGSGLTALGLKPKNTIAIFCETRAEWMIAAQTCFKYNFPLVTLYATLGKEAVVHGLNESEASYLITSVELLESKLKAALLDINCVKHIIYVDNKTINRAEYPEGLEIHSMQSVEELGSKPENSSIPPSRPTPSDMAIVMYTSGSTGRPKGVMMHHSNLIAGMTGQCERIPGLGPKDTYIGYLPLAHVLELTAEISCFTYGCRIGYSSPLTLSDQSSKIKKGSKGDCTVLKPTLMAAVPEIMDRIYKNVMSKVQEMNYIQKTLFKIGYDYKLEQIKKGYDAPLCNLILFKKVKALLGGNVRMMLSGGAPLSPQTHRFMNVCFCCPIGQGYGLTESCGAGTVTEVTDYTTGRVGAPLICCEIKLKDWQEGGYTVHDKPNPRGEIVIGGQNISMGYFKNEEKTAEDYSVDENGQRWFCTGDIGEFHPDGCLQIIDRKKDLVKLQAGEYVSLGKVEAALKNCPLIDNICAFAKSDQSYVISFVVPNQKKLTLLAQQKGVEGSWVDICNNPAMEAEILKEIREAANAMKLERFEIPIKVRLSPEPWTPETGLVTDAFKLKRKELKNHYLKDIERMYGGK</sequence>
<keyword id="KW-0025">Alternative splicing</keyword>
<keyword id="KW-0067">ATP-binding</keyword>
<keyword id="KW-1003">Cell membrane</keyword>
<keyword id="KW-0256">Endoplasmic reticulum</keyword>
<keyword id="KW-0276">Fatty acid metabolism</keyword>
<keyword id="KW-0436">Ligase</keyword>
<keyword id="KW-0443">Lipid metabolism</keyword>
<keyword id="KW-0460">Magnesium</keyword>
<keyword id="KW-0472">Membrane</keyword>
<keyword id="KW-0492">Microsome</keyword>
<keyword id="KW-0496">Mitochondrion</keyword>
<keyword id="KW-1000">Mitochondrion outer membrane</keyword>
<keyword id="KW-0547">Nucleotide-binding</keyword>
<keyword id="KW-0576">Peroxisome</keyword>
<keyword id="KW-0597">Phosphoprotein</keyword>
<keyword id="KW-1185">Reference proteome</keyword>
<keyword id="KW-0812">Transmembrane</keyword>
<keyword id="KW-1133">Transmembrane helix</keyword>
<proteinExistence type="evidence at protein level"/>
<organism>
    <name type="scientific">Rattus norvegicus</name>
    <name type="common">Rat</name>
    <dbReference type="NCBI Taxonomy" id="10116"/>
    <lineage>
        <taxon>Eukaryota</taxon>
        <taxon>Metazoa</taxon>
        <taxon>Chordata</taxon>
        <taxon>Craniata</taxon>
        <taxon>Vertebrata</taxon>
        <taxon>Euteleostomi</taxon>
        <taxon>Mammalia</taxon>
        <taxon>Eutheria</taxon>
        <taxon>Euarchontoglires</taxon>
        <taxon>Glires</taxon>
        <taxon>Rodentia</taxon>
        <taxon>Myomorpha</taxon>
        <taxon>Muroidea</taxon>
        <taxon>Muridae</taxon>
        <taxon>Murinae</taxon>
        <taxon>Rattus</taxon>
    </lineage>
</organism>
<name>ACSL4_RAT</name>
<comment type="function">
    <text evidence="2 5 6 7">Catalyzes the conversion of long-chain fatty acids to their active form acyl-CoA for both synthesis of cellular lipids, and degradation via beta-oxidation (PubMed:23766516, PubMed:28209804, PubMed:9096315). Preferentially activates arachidonate and eicosapentaenoate as substrates (PubMed:9096315). Preferentially activates 8,9-EET &gt; 14,15-EET &gt; 5,6-EET &gt; 11,12-EET (PubMed:23766516). Modulates glucose-stimulated insulin secretion by regulating the levels of unesterified EETs (PubMed:23766516). Modulates prostaglandin E2 secretion (By similarity).</text>
</comment>
<comment type="catalytic activity">
    <reaction evidence="5 6 7">
        <text>a long-chain fatty acid + ATP + CoA = a long-chain fatty acyl-CoA + AMP + diphosphate</text>
        <dbReference type="Rhea" id="RHEA:15421"/>
        <dbReference type="ChEBI" id="CHEBI:30616"/>
        <dbReference type="ChEBI" id="CHEBI:33019"/>
        <dbReference type="ChEBI" id="CHEBI:57287"/>
        <dbReference type="ChEBI" id="CHEBI:57560"/>
        <dbReference type="ChEBI" id="CHEBI:83139"/>
        <dbReference type="ChEBI" id="CHEBI:456215"/>
        <dbReference type="EC" id="6.2.1.3"/>
    </reaction>
    <physiologicalReaction direction="left-to-right" evidence="6">
        <dbReference type="Rhea" id="RHEA:15422"/>
    </physiologicalReaction>
</comment>
<comment type="catalytic activity">
    <reaction evidence="6">
        <text>(5Z,8Z,11Z,14Z)-eicosatetraenoate + ATP + CoA = (5Z,8Z,11Z,14Z)-eicosatetraenoyl-CoA + AMP + diphosphate</text>
        <dbReference type="Rhea" id="RHEA:19713"/>
        <dbReference type="ChEBI" id="CHEBI:30616"/>
        <dbReference type="ChEBI" id="CHEBI:32395"/>
        <dbReference type="ChEBI" id="CHEBI:33019"/>
        <dbReference type="ChEBI" id="CHEBI:57287"/>
        <dbReference type="ChEBI" id="CHEBI:57368"/>
        <dbReference type="ChEBI" id="CHEBI:456215"/>
        <dbReference type="EC" id="6.2.1.15"/>
    </reaction>
    <physiologicalReaction direction="left-to-right" evidence="6">
        <dbReference type="Rhea" id="RHEA:19714"/>
    </physiologicalReaction>
</comment>
<comment type="catalytic activity">
    <reaction evidence="6">
        <text>15-hydroxy-(5Z,8Z,11Z,13E)-eicosatetraenoate + ATP + CoA = 15-hydroxy-(5Z,8Z,11Z,13E)-eicosatetraenoyl-CoA + AMP + diphosphate</text>
        <dbReference type="Rhea" id="RHEA:52116"/>
        <dbReference type="ChEBI" id="CHEBI:30616"/>
        <dbReference type="ChEBI" id="CHEBI:33019"/>
        <dbReference type="ChEBI" id="CHEBI:57287"/>
        <dbReference type="ChEBI" id="CHEBI:78832"/>
        <dbReference type="ChEBI" id="CHEBI:136409"/>
        <dbReference type="ChEBI" id="CHEBI:456215"/>
    </reaction>
    <physiologicalReaction direction="left-to-right" evidence="11">
        <dbReference type="Rhea" id="RHEA:52117"/>
    </physiologicalReaction>
</comment>
<comment type="catalytic activity">
    <reaction evidence="6">
        <text>12-hydroxy-(5Z,8Z,10E,14Z)-eicosatetraenoate + ATP + CoA = 12-hydroxy-(5Z,8Z,10E,14Z)-eicosatetraenoyl-CoA + AMP + diphosphate</text>
        <dbReference type="Rhea" id="RHEA:52112"/>
        <dbReference type="ChEBI" id="CHEBI:30616"/>
        <dbReference type="ChEBI" id="CHEBI:33019"/>
        <dbReference type="ChEBI" id="CHEBI:57287"/>
        <dbReference type="ChEBI" id="CHEBI:90718"/>
        <dbReference type="ChEBI" id="CHEBI:136408"/>
        <dbReference type="ChEBI" id="CHEBI:456215"/>
    </reaction>
    <physiologicalReaction direction="left-to-right" evidence="11">
        <dbReference type="Rhea" id="RHEA:52113"/>
    </physiologicalReaction>
</comment>
<comment type="catalytic activity">
    <reaction evidence="6">
        <text>5-hydroxy-(6E,8Z,11Z,14Z)-eicosatetraenoate + ATP + CoA = 5-hydroxy-(6E,8Z,11Z,14Z)-eicosatetraenoyl-CoA + AMP + diphosphate</text>
        <dbReference type="Rhea" id="RHEA:52108"/>
        <dbReference type="ChEBI" id="CHEBI:30616"/>
        <dbReference type="ChEBI" id="CHEBI:33019"/>
        <dbReference type="ChEBI" id="CHEBI:57287"/>
        <dbReference type="ChEBI" id="CHEBI:65341"/>
        <dbReference type="ChEBI" id="CHEBI:136407"/>
        <dbReference type="ChEBI" id="CHEBI:456215"/>
    </reaction>
    <physiologicalReaction direction="left-to-right" evidence="11">
        <dbReference type="Rhea" id="RHEA:52109"/>
    </physiologicalReaction>
</comment>
<comment type="catalytic activity">
    <reaction evidence="5">
        <text>5,6-epoxy-(8Z,11Z,14Z)-eicosatrienoate + ATP + CoA = 5,6-epoxy-(8Z,11Z,14Z)-eicosatrienoyl-CoA + AMP + diphosphate</text>
        <dbReference type="Rhea" id="RHEA:52088"/>
        <dbReference type="ChEBI" id="CHEBI:30616"/>
        <dbReference type="ChEBI" id="CHEBI:33019"/>
        <dbReference type="ChEBI" id="CHEBI:57287"/>
        <dbReference type="ChEBI" id="CHEBI:131992"/>
        <dbReference type="ChEBI" id="CHEBI:136351"/>
        <dbReference type="ChEBI" id="CHEBI:456215"/>
    </reaction>
    <physiologicalReaction direction="left-to-right" evidence="10">
        <dbReference type="Rhea" id="RHEA:52089"/>
    </physiologicalReaction>
</comment>
<comment type="catalytic activity">
    <reaction evidence="5 6">
        <text>14,15-epoxy-(5Z,8Z,11Z)-eicosatrienoate + ATP + CoA = 14,15-epoxy-(5Z,8Z,11Z)-eicosatrienoyl-CoA + AMP + diphosphate</text>
        <dbReference type="Rhea" id="RHEA:52016"/>
        <dbReference type="ChEBI" id="CHEBI:30616"/>
        <dbReference type="ChEBI" id="CHEBI:33019"/>
        <dbReference type="ChEBI" id="CHEBI:57287"/>
        <dbReference type="ChEBI" id="CHEBI:84024"/>
        <dbReference type="ChEBI" id="CHEBI:136117"/>
        <dbReference type="ChEBI" id="CHEBI:456215"/>
    </reaction>
    <physiologicalReaction direction="left-to-right" evidence="5 6">
        <dbReference type="Rhea" id="RHEA:52017"/>
    </physiologicalReaction>
</comment>
<comment type="catalytic activity">
    <reaction evidence="5 6">
        <text>11,12-epoxy-(5Z,8Z,14Z)-eicosatrienoate + ATP + CoA = 11,12-epoxy-(5Z,8Z,14Z)-eicosatrienoyl-CoA + AMP + diphosphate</text>
        <dbReference type="Rhea" id="RHEA:52012"/>
        <dbReference type="ChEBI" id="CHEBI:30616"/>
        <dbReference type="ChEBI" id="CHEBI:33019"/>
        <dbReference type="ChEBI" id="CHEBI:57287"/>
        <dbReference type="ChEBI" id="CHEBI:76625"/>
        <dbReference type="ChEBI" id="CHEBI:136115"/>
        <dbReference type="ChEBI" id="CHEBI:456215"/>
    </reaction>
    <physiologicalReaction direction="left-to-right" evidence="5 6">
        <dbReference type="Rhea" id="RHEA:52013"/>
    </physiologicalReaction>
</comment>
<comment type="catalytic activity">
    <reaction evidence="5 6">
        <text>8,9-epoxy-(5Z,11Z,14Z)-eicosatrienoate + ATP + CoA = 8,9-epoxy-(5Z,11Z,14Z)-eicosatrienoyl-CoA + AMP + diphosphate</text>
        <dbReference type="Rhea" id="RHEA:52008"/>
        <dbReference type="ChEBI" id="CHEBI:30616"/>
        <dbReference type="ChEBI" id="CHEBI:33019"/>
        <dbReference type="ChEBI" id="CHEBI:57287"/>
        <dbReference type="ChEBI" id="CHEBI:84025"/>
        <dbReference type="ChEBI" id="CHEBI:136107"/>
        <dbReference type="ChEBI" id="CHEBI:456215"/>
    </reaction>
    <physiologicalReaction direction="left-to-right" evidence="5 6">
        <dbReference type="Rhea" id="RHEA:52009"/>
    </physiologicalReaction>
</comment>
<comment type="catalytic activity">
    <reaction evidence="2">
        <text>hexadecanoate + ATP + CoA = hexadecanoyl-CoA + AMP + diphosphate</text>
        <dbReference type="Rhea" id="RHEA:30751"/>
        <dbReference type="ChEBI" id="CHEBI:7896"/>
        <dbReference type="ChEBI" id="CHEBI:30616"/>
        <dbReference type="ChEBI" id="CHEBI:33019"/>
        <dbReference type="ChEBI" id="CHEBI:57287"/>
        <dbReference type="ChEBI" id="CHEBI:57379"/>
        <dbReference type="ChEBI" id="CHEBI:456215"/>
    </reaction>
    <physiologicalReaction direction="left-to-right" evidence="2">
        <dbReference type="Rhea" id="RHEA:30752"/>
    </physiologicalReaction>
</comment>
<comment type="catalytic activity">
    <reaction evidence="2">
        <text>(E)-hexadec-2-enoate + ATP + CoA = (2E)-hexadecenoyl-CoA + AMP + diphosphate</text>
        <dbReference type="Rhea" id="RHEA:36139"/>
        <dbReference type="ChEBI" id="CHEBI:30616"/>
        <dbReference type="ChEBI" id="CHEBI:33019"/>
        <dbReference type="ChEBI" id="CHEBI:57287"/>
        <dbReference type="ChEBI" id="CHEBI:61526"/>
        <dbReference type="ChEBI" id="CHEBI:72745"/>
        <dbReference type="ChEBI" id="CHEBI:456215"/>
    </reaction>
    <physiologicalReaction direction="left-to-right" evidence="2">
        <dbReference type="Rhea" id="RHEA:36140"/>
    </physiologicalReaction>
</comment>
<comment type="cofactor">
    <cofactor evidence="1">
        <name>Mg(2+)</name>
        <dbReference type="ChEBI" id="CHEBI:18420"/>
    </cofactor>
</comment>
<comment type="activity regulation">
    <text evidence="2">Both triacsin C and rosiglitazone inhibit arachidonoyl-CoA ligase activity.</text>
</comment>
<comment type="biophysicochemical properties">
    <kinetics>
        <KM evidence="4">34 uM for ATP</KM>
        <KM evidence="4">4.1 uM for CoA</KM>
        <KM evidence="4">5.4 uM for palmitate</KM>
        <KM evidence="4">19.5 uM for oleate</KM>
        <KM evidence="4">10 uM for arachidonate</KM>
        <KM evidence="6">4.5 uM for palmitate (when expressed in bacteria)</KM>
        <KM evidence="6">2.9 uM for stearate (when expressed in bacteria)</KM>
        <KM evidence="6">16.7 uM for oleate (when expressed in bacteria)</KM>
        <KM evidence="6">4 uM for linoleate (when expressed in bacteria)</KM>
        <KM evidence="6">11.4 uM for arachidonate (when expressed in bacteria)</KM>
        <KM evidence="6">24.8 uM for palmitate (when expressed in mammalian cell)</KM>
        <KM evidence="6">12.5 uM for stearate (when expressed in mammalian cell)</KM>
        <KM evidence="6">3.6 uM for oleate (when expressed in mammalian cell)</KM>
        <KM evidence="6">13.3 uM for linoleate (when expressed in mammalian cell)</KM>
        <KM evidence="6">7.5 uM for arachidonate (when expressed in mammalian cell)</KM>
        <Vmax evidence="4">2800.0 nmol/min/mg enzyme with palmitate as substrate</Vmax>
        <Vmax evidence="4">673.0 nmol/min/mg enzyme with oleate as substrate</Vmax>
        <Vmax evidence="4">4200.0 nmol/min/mg enzyme with arachidonate as substrate</Vmax>
        <Vmax evidence="6">4451.0 nmol/min/mg enzyme with palmitate as substrate (when expressed in bacteria)</Vmax>
        <Vmax evidence="6">2737.0 nmol/min/mg enzyme with stearate as substrate (when expressed in bacteria)</Vmax>
        <Vmax evidence="6">2366.0 nmol/min/mg enzyme with oleate as substrate (when expressed in bacteria)</Vmax>
        <Vmax evidence="6">1231.0 nmol/min/mg enzyme with linoleate as substrate (when expressed in bacteria)</Vmax>
        <Vmax evidence="6">7180.0 nmol/min/mg enzyme with arachidonate as substrate (when expressed in bacteria)</Vmax>
        <Vmax evidence="6">1990.0 nmol/min/mg enzyme with palmitate as substrate (when expressed in mammalian cell)</Vmax>
        <Vmax evidence="6">1240.0 nmol/min/mg enzyme with stearate as substrate (when expressed in mammalian cell)</Vmax>
        <Vmax evidence="6">466.0 nmol/min/mg enzyme with oleate as substrate (when expressed in mammalian cell)</Vmax>
        <Vmax evidence="6">1011.0 nmol/min/mg enzyme with linoleate as substrate (when expressed in mammalian cell)</Vmax>
        <Vmax evidence="6">4339.0 nmol/min/mg enzyme with arachidonate as substrate (when expressed in mammalian cell)</Vmax>
    </kinetics>
</comment>
<comment type="subcellular location">
    <subcellularLocation>
        <location evidence="1">Mitochondrion outer membrane</location>
        <topology evidence="1">Single-pass type III membrane protein</topology>
    </subcellularLocation>
    <subcellularLocation>
        <location evidence="1">Peroxisome membrane</location>
        <topology evidence="1">Single-pass type III membrane protein</topology>
    </subcellularLocation>
    <subcellularLocation>
        <location evidence="1">Microsome membrane</location>
        <topology evidence="1">Single-pass type III membrane protein</topology>
    </subcellularLocation>
    <subcellularLocation>
        <location evidence="2">Endoplasmic reticulum membrane</location>
        <topology evidence="1">Single-pass type III membrane protein</topology>
    </subcellularLocation>
    <subcellularLocation>
        <location evidence="2">Cell membrane</location>
    </subcellularLocation>
</comment>
<comment type="alternative products">
    <event type="alternative splicing"/>
    <isoform>
        <id>O35547-1</id>
        <name>Long</name>
        <sequence type="displayed"/>
    </isoform>
    <isoform>
        <id>O35547-2</id>
        <name>Short</name>
        <sequence type="described" ref="VSP_060224"/>
    </isoform>
</comment>
<comment type="induction">
    <text evidence="5">Expression is decreased by polyunsaturated fatty acid (PUFA).</text>
</comment>
<comment type="miscellaneous">
    <text evidence="8">5 rat isozymes encoded by different genes have been described. ACSL6 corresponds to isozyme 2 (ACS2).</text>
</comment>
<comment type="similarity">
    <text evidence="9">Belongs to the ATP-dependent AMP-binding enzyme family.</text>
</comment>
<gene>
    <name type="primary">Acsl4</name>
    <name type="synonym">Acs4</name>
    <name type="synonym">Facl4</name>
</gene>
<evidence type="ECO:0000250" key="1"/>
<evidence type="ECO:0000250" key="2">
    <source>
        <dbReference type="UniProtKB" id="O60488"/>
    </source>
</evidence>
<evidence type="ECO:0000255" key="3"/>
<evidence type="ECO:0000269" key="4">
    <source>
    </source>
</evidence>
<evidence type="ECO:0000269" key="5">
    <source>
    </source>
</evidence>
<evidence type="ECO:0000269" key="6">
    <source>
    </source>
</evidence>
<evidence type="ECO:0000269" key="7">
    <source>
    </source>
</evidence>
<evidence type="ECO:0000303" key="8">
    <source>
    </source>
</evidence>
<evidence type="ECO:0000305" key="9"/>
<evidence type="ECO:0000305" key="10">
    <source>
    </source>
</evidence>
<evidence type="ECO:0000305" key="11">
    <source>
    </source>
</evidence>
<dbReference type="EC" id="6.2.1.3" evidence="5 6 7"/>
<dbReference type="EC" id="6.2.1.15" evidence="6"/>
<dbReference type="EMBL" id="D85189">
    <property type="protein sequence ID" value="BAA22195.1"/>
    <property type="molecule type" value="mRNA"/>
</dbReference>
<dbReference type="EMBL" id="FM034112">
    <property type="status" value="NOT_ANNOTATED_CDS"/>
    <property type="molecule type" value="mRNA"/>
</dbReference>
<dbReference type="RefSeq" id="NP_001418578.1">
    <molecule id="O35547-1"/>
    <property type="nucleotide sequence ID" value="NM_001431649.1"/>
</dbReference>
<dbReference type="RefSeq" id="NP_001418579.1">
    <molecule id="O35547-1"/>
    <property type="nucleotide sequence ID" value="NM_001431650.1"/>
</dbReference>
<dbReference type="RefSeq" id="NP_001418580.1">
    <molecule id="O35547-2"/>
    <property type="nucleotide sequence ID" value="NM_001431651.1"/>
</dbReference>
<dbReference type="RefSeq" id="NP_001418581.1">
    <molecule id="O35547-2"/>
    <property type="nucleotide sequence ID" value="NM_001431652.1"/>
</dbReference>
<dbReference type="RefSeq" id="NP_001418582.1">
    <molecule id="O35547-2"/>
    <property type="nucleotide sequence ID" value="NM_001431653.1"/>
</dbReference>
<dbReference type="RefSeq" id="NP_001418583.1">
    <molecule id="O35547-2"/>
    <property type="nucleotide sequence ID" value="NM_001431654.1"/>
</dbReference>
<dbReference type="RefSeq" id="NP_001418584.1">
    <molecule id="O35547-1"/>
    <property type="nucleotide sequence ID" value="NM_001431655.1"/>
</dbReference>
<dbReference type="RefSeq" id="NP_446075.1">
    <molecule id="O35547-2"/>
    <property type="nucleotide sequence ID" value="NM_053623.2"/>
</dbReference>
<dbReference type="RefSeq" id="XP_006257376.1">
    <property type="nucleotide sequence ID" value="XM_006257314.3"/>
</dbReference>
<dbReference type="RefSeq" id="XP_006257377.1">
    <property type="nucleotide sequence ID" value="XM_006257315.3"/>
</dbReference>
<dbReference type="RefSeq" id="XP_006257378.1">
    <property type="nucleotide sequence ID" value="XM_006257316.2"/>
</dbReference>
<dbReference type="SMR" id="O35547"/>
<dbReference type="FunCoup" id="O35547">
    <property type="interactions" value="2876"/>
</dbReference>
<dbReference type="IntAct" id="O35547">
    <property type="interactions" value="1"/>
</dbReference>
<dbReference type="STRING" id="10116.ENSRNOP00000026057"/>
<dbReference type="SwissLipids" id="SLP:000001679"/>
<dbReference type="GlyGen" id="O35547">
    <property type="glycosylation" value="1 site"/>
</dbReference>
<dbReference type="PhosphoSitePlus" id="O35547"/>
<dbReference type="jPOST" id="O35547"/>
<dbReference type="PaxDb" id="10116-ENSRNOP00000026057"/>
<dbReference type="Ensembl" id="ENSRNOT00000026057.7">
    <molecule id="O35547-2"/>
    <property type="protein sequence ID" value="ENSRNOP00000026057.5"/>
    <property type="gene ID" value="ENSRNOG00000019180.7"/>
</dbReference>
<dbReference type="GeneID" id="113976"/>
<dbReference type="KEGG" id="rno:113976"/>
<dbReference type="AGR" id="RGD:69401"/>
<dbReference type="CTD" id="2182"/>
<dbReference type="RGD" id="69401">
    <property type="gene designation" value="Acsl4"/>
</dbReference>
<dbReference type="VEuPathDB" id="HostDB:ENSRNOG00000019180"/>
<dbReference type="eggNOG" id="KOG1180">
    <property type="taxonomic scope" value="Eukaryota"/>
</dbReference>
<dbReference type="GeneTree" id="ENSGT00940000157427"/>
<dbReference type="HOGENOM" id="CLU_000022_45_2_1"/>
<dbReference type="InParanoid" id="O35547"/>
<dbReference type="OMA" id="RWEPVFH"/>
<dbReference type="OrthoDB" id="1700726at2759"/>
<dbReference type="PhylomeDB" id="O35547"/>
<dbReference type="TreeFam" id="TF314012"/>
<dbReference type="BRENDA" id="6.2.1.3">
    <property type="organism ID" value="5301"/>
</dbReference>
<dbReference type="Reactome" id="R-RNO-434313">
    <property type="pathway name" value="Intracellular metabolism of fatty acids regulates insulin secretion"/>
</dbReference>
<dbReference type="Reactome" id="R-RNO-75876">
    <property type="pathway name" value="Synthesis of very long-chain fatty acyl-CoAs"/>
</dbReference>
<dbReference type="SABIO-RK" id="O35547"/>
<dbReference type="PRO" id="PR:O35547"/>
<dbReference type="Proteomes" id="UP000002494">
    <property type="component" value="Chromosome X"/>
</dbReference>
<dbReference type="Bgee" id="ENSRNOG00000019180">
    <property type="expression patterns" value="Expressed in Ammon's horn and 20 other cell types or tissues"/>
</dbReference>
<dbReference type="GO" id="GO:0005737">
    <property type="term" value="C:cytoplasm"/>
    <property type="evidence" value="ECO:0000266"/>
    <property type="project" value="RGD"/>
</dbReference>
<dbReference type="GO" id="GO:0005783">
    <property type="term" value="C:endoplasmic reticulum"/>
    <property type="evidence" value="ECO:0000266"/>
    <property type="project" value="RGD"/>
</dbReference>
<dbReference type="GO" id="GO:0005789">
    <property type="term" value="C:endoplasmic reticulum membrane"/>
    <property type="evidence" value="ECO:0007669"/>
    <property type="project" value="UniProtKB-SubCell"/>
</dbReference>
<dbReference type="GO" id="GO:0005811">
    <property type="term" value="C:lipid droplet"/>
    <property type="evidence" value="ECO:0000266"/>
    <property type="project" value="RGD"/>
</dbReference>
<dbReference type="GO" id="GO:0044233">
    <property type="term" value="C:mitochondria-associated endoplasmic reticulum membrane contact site"/>
    <property type="evidence" value="ECO:0000266"/>
    <property type="project" value="RGD"/>
</dbReference>
<dbReference type="GO" id="GO:0031966">
    <property type="term" value="C:mitochondrial membrane"/>
    <property type="evidence" value="ECO:0000314"/>
    <property type="project" value="RGD"/>
</dbReference>
<dbReference type="GO" id="GO:0005741">
    <property type="term" value="C:mitochondrial outer membrane"/>
    <property type="evidence" value="ECO:0007669"/>
    <property type="project" value="UniProtKB-SubCell"/>
</dbReference>
<dbReference type="GO" id="GO:0005739">
    <property type="term" value="C:mitochondrion"/>
    <property type="evidence" value="ECO:0000266"/>
    <property type="project" value="RGD"/>
</dbReference>
<dbReference type="GO" id="GO:0043025">
    <property type="term" value="C:neuronal cell body"/>
    <property type="evidence" value="ECO:0000314"/>
    <property type="project" value="RGD"/>
</dbReference>
<dbReference type="GO" id="GO:0005778">
    <property type="term" value="C:peroxisomal membrane"/>
    <property type="evidence" value="ECO:0007669"/>
    <property type="project" value="UniProtKB-SubCell"/>
</dbReference>
<dbReference type="GO" id="GO:0005777">
    <property type="term" value="C:peroxisome"/>
    <property type="evidence" value="ECO:0000314"/>
    <property type="project" value="RGD"/>
</dbReference>
<dbReference type="GO" id="GO:0005886">
    <property type="term" value="C:plasma membrane"/>
    <property type="evidence" value="ECO:0000318"/>
    <property type="project" value="GO_Central"/>
</dbReference>
<dbReference type="GO" id="GO:0047676">
    <property type="term" value="F:arachidonate-CoA ligase activity"/>
    <property type="evidence" value="ECO:0000314"/>
    <property type="project" value="UniProtKB"/>
</dbReference>
<dbReference type="GO" id="GO:0005524">
    <property type="term" value="F:ATP binding"/>
    <property type="evidence" value="ECO:0007669"/>
    <property type="project" value="UniProtKB-KW"/>
</dbReference>
<dbReference type="GO" id="GO:0004467">
    <property type="term" value="F:long-chain fatty acid-CoA ligase activity"/>
    <property type="evidence" value="ECO:0000314"/>
    <property type="project" value="UniProtKB"/>
</dbReference>
<dbReference type="GO" id="GO:0031957">
    <property type="term" value="F:very long-chain fatty acid-CoA ligase activity"/>
    <property type="evidence" value="ECO:0000266"/>
    <property type="project" value="RGD"/>
</dbReference>
<dbReference type="GO" id="GO:0060996">
    <property type="term" value="P:dendritic spine development"/>
    <property type="evidence" value="ECO:0000315"/>
    <property type="project" value="RGD"/>
</dbReference>
<dbReference type="GO" id="GO:0060136">
    <property type="term" value="P:embryonic process involved in female pregnancy"/>
    <property type="evidence" value="ECO:0000266"/>
    <property type="project" value="RGD"/>
</dbReference>
<dbReference type="GO" id="GO:0006631">
    <property type="term" value="P:fatty acid metabolic process"/>
    <property type="evidence" value="ECO:0000314"/>
    <property type="project" value="RGD"/>
</dbReference>
<dbReference type="GO" id="GO:0015908">
    <property type="term" value="P:fatty acid transport"/>
    <property type="evidence" value="ECO:0000316"/>
    <property type="project" value="RGD"/>
</dbReference>
<dbReference type="GO" id="GO:0006629">
    <property type="term" value="P:lipid metabolic process"/>
    <property type="evidence" value="ECO:0000266"/>
    <property type="project" value="RGD"/>
</dbReference>
<dbReference type="GO" id="GO:0001676">
    <property type="term" value="P:long-chain fatty acid metabolic process"/>
    <property type="evidence" value="ECO:0000314"/>
    <property type="project" value="UniProtKB"/>
</dbReference>
<dbReference type="GO" id="GO:0035338">
    <property type="term" value="P:long-chain fatty-acyl-CoA biosynthetic process"/>
    <property type="evidence" value="ECO:0000316"/>
    <property type="project" value="RGD"/>
</dbReference>
<dbReference type="GO" id="GO:0035336">
    <property type="term" value="P:long-chain fatty-acyl-CoA metabolic process"/>
    <property type="evidence" value="ECO:0000318"/>
    <property type="project" value="GO_Central"/>
</dbReference>
<dbReference type="GO" id="GO:0030182">
    <property type="term" value="P:neuron differentiation"/>
    <property type="evidence" value="ECO:0000318"/>
    <property type="project" value="GO_Central"/>
</dbReference>
<dbReference type="GO" id="GO:0032024">
    <property type="term" value="P:positive regulation of insulin secretion"/>
    <property type="evidence" value="ECO:0000315"/>
    <property type="project" value="UniProtKB"/>
</dbReference>
<dbReference type="GO" id="GO:0070672">
    <property type="term" value="P:response to interleukin-15"/>
    <property type="evidence" value="ECO:0000270"/>
    <property type="project" value="RGD"/>
</dbReference>
<dbReference type="GO" id="GO:0007584">
    <property type="term" value="P:response to nutrient"/>
    <property type="evidence" value="ECO:0000270"/>
    <property type="project" value="RGD"/>
</dbReference>
<dbReference type="GO" id="GO:0019432">
    <property type="term" value="P:triglyceride biosynthetic process"/>
    <property type="evidence" value="ECO:0000316"/>
    <property type="project" value="RGD"/>
</dbReference>
<dbReference type="CDD" id="cd17639">
    <property type="entry name" value="LC_FACS_euk1"/>
    <property type="match status" value="1"/>
</dbReference>
<dbReference type="Gene3D" id="3.30.300.30">
    <property type="match status" value="1"/>
</dbReference>
<dbReference type="Gene3D" id="3.40.50.12780">
    <property type="entry name" value="N-terminal domain of ligase-like"/>
    <property type="match status" value="1"/>
</dbReference>
<dbReference type="InterPro" id="IPR045851">
    <property type="entry name" value="AMP-bd_C_sf"/>
</dbReference>
<dbReference type="InterPro" id="IPR020845">
    <property type="entry name" value="AMP-binding_CS"/>
</dbReference>
<dbReference type="InterPro" id="IPR000873">
    <property type="entry name" value="AMP-dep_synth/lig_dom"/>
</dbReference>
<dbReference type="InterPro" id="IPR042099">
    <property type="entry name" value="ANL_N_sf"/>
</dbReference>
<dbReference type="PANTHER" id="PTHR43272">
    <property type="entry name" value="LONG-CHAIN-FATTY-ACID--COA LIGASE"/>
    <property type="match status" value="1"/>
</dbReference>
<dbReference type="PANTHER" id="PTHR43272:SF22">
    <property type="entry name" value="LONG-CHAIN-FATTY-ACID--COA LIGASE 4"/>
    <property type="match status" value="1"/>
</dbReference>
<dbReference type="Pfam" id="PF00501">
    <property type="entry name" value="AMP-binding"/>
    <property type="match status" value="1"/>
</dbReference>
<dbReference type="SUPFAM" id="SSF56801">
    <property type="entry name" value="Acetyl-CoA synthetase-like"/>
    <property type="match status" value="1"/>
</dbReference>
<dbReference type="PROSITE" id="PS00455">
    <property type="entry name" value="AMP_BINDING"/>
    <property type="match status" value="1"/>
</dbReference>
<reference key="1">
    <citation type="journal article" date="1997" name="Proc. Natl. Acad. Sci. U.S.A.">
        <title>A novel arachidonate-preferring acyl-CoA synthetase is present in steroidogenic cells of the rat adrenal, ovary, and testis.</title>
        <authorList>
            <person name="Kang M."/>
            <person name="Fujino T."/>
            <person name="Sasano H."/>
            <person name="Minekura H."/>
            <person name="Yabuki N."/>
            <person name="Nagura H."/>
            <person name="Iijima H."/>
            <person name="Yamamoto T.T."/>
        </authorList>
    </citation>
    <scope>NUCLEOTIDE SEQUENCE [MRNA]</scope>
    <scope>FUNCTION</scope>
    <scope>CATALYTIC ACTIVITY (ISOFORM SHORT)</scope>
    <source>
        <strain>Wistar</strain>
        <tissue>Liver</tissue>
    </source>
</reference>
<reference key="2">
    <citation type="submission" date="2008-04" db="EMBL/GenBank/DDBJ databases">
        <title>Euratools EST.</title>
        <authorList>
            <person name="Kube M."/>
            <person name="Klages S."/>
            <person name="Kuhl H."/>
            <person name="Thiel J."/>
            <person name="Beck A."/>
            <person name="Reinhardt R."/>
        </authorList>
    </citation>
    <scope>NUCLEOTIDE SEQUENCE [LARGE SCALE MRNA] OF 1-51 (ISOFORM LONG)</scope>
</reference>
<reference key="3">
    <citation type="journal article" date="2005" name="Biochemistry">
        <title>Characterization of recombinant long-chain rat acyl-CoA synthetase isoforms 3 and 6: identification of a novel variant of isoform 6.</title>
        <authorList>
            <person name="Van Horn C.G."/>
            <person name="Caviglia J.M."/>
            <person name="Li L.O."/>
            <person name="Wang S."/>
            <person name="Granger D.A."/>
            <person name="Coleman R.A."/>
        </authorList>
    </citation>
    <scope>BIOPHYSICOCHEMICAL PROPERTIES</scope>
    <source>
        <tissue>Brain</tissue>
    </source>
</reference>
<reference key="4">
    <citation type="journal article" date="2013" name="J. Biol. Chem.">
        <title>Diminished acyl-CoA synthetase isoform 4 activity in INS 832/13 cells reduces cellular epoxyeicosatrienoic acid levels and results in impaired glucose-stimulated insulin secretion.</title>
        <authorList>
            <person name="Klett E.L."/>
            <person name="Chen S."/>
            <person name="Edin M.L."/>
            <person name="Li L.O."/>
            <person name="Ilkayeva O."/>
            <person name="Zeldin D.C."/>
            <person name="Newgard C.B."/>
            <person name="Coleman R.A."/>
        </authorList>
    </citation>
    <scope>CATALYTIC ACTIVITY</scope>
    <scope>FUNCTION</scope>
    <scope>INDUCTION</scope>
</reference>
<reference key="5">
    <citation type="journal article" date="2017" name="J. Lipid Res.">
        <title>Long-chain acyl-CoA synthetase isoforms differ in preferences for eicosanoid species and long-chain fatty acids.</title>
        <authorList>
            <person name="Klett E.L."/>
            <person name="Chen S."/>
            <person name="Yechoor A."/>
            <person name="Lih F.B."/>
            <person name="Coleman R.A."/>
        </authorList>
    </citation>
    <scope>CATALYTIC ACTIVITY</scope>
    <scope>FUNCTION</scope>
    <scope>BIOPHYSICOCHEMICAL PROPERTIES</scope>
</reference>
<reference key="6">
    <citation type="journal article" date="2017" name="J. Lipid Res.">
        <authorList>
            <person name="Klett E.L."/>
            <person name="Chen S."/>
            <person name="Yechoor A."/>
            <person name="Lih F.B."/>
            <person name="Coleman R.A."/>
        </authorList>
    </citation>
    <scope>ERRATUM OF PUBMED:28209804</scope>
</reference>
<feature type="chain" id="PRO_0000193111" description="Long-chain-fatty-acid--CoA ligase 4">
    <location>
        <begin position="1"/>
        <end position="711"/>
    </location>
</feature>
<feature type="transmembrane region" description="Helical; Signal-anchor for type III membrane protein" evidence="3">
    <location>
        <begin position="8"/>
        <end position="28"/>
    </location>
</feature>
<feature type="topological domain" description="Cytoplasmic" evidence="9">
    <location>
        <begin position="29"/>
        <end position="711"/>
    </location>
</feature>
<feature type="modified residue" description="Phosphoserine" evidence="2">
    <location>
        <position position="447"/>
    </location>
</feature>
<feature type="splice variant" id="VSP_060224" description="In isoform Short.">
    <location>
        <begin position="1"/>
        <end position="41"/>
    </location>
</feature>